<reference key="1">
    <citation type="journal article" date="2009" name="J. Bacteriol.">
        <title>Complete genome sequence of Rhodobacter sphaeroides KD131.</title>
        <authorList>
            <person name="Lim S.-K."/>
            <person name="Kim S.J."/>
            <person name="Cha S.H."/>
            <person name="Oh Y.-K."/>
            <person name="Rhee H.-J."/>
            <person name="Kim M.-S."/>
            <person name="Lee J.K."/>
        </authorList>
    </citation>
    <scope>NUCLEOTIDE SEQUENCE [LARGE SCALE GENOMIC DNA]</scope>
    <source>
        <strain>KD131 / KCTC 12085</strain>
    </source>
</reference>
<protein>
    <recommendedName>
        <fullName evidence="1">Phosphoglucosamine mutase</fullName>
        <ecNumber evidence="1">5.4.2.10</ecNumber>
    </recommendedName>
</protein>
<name>GLMM_CERSK</name>
<sequence length="447" mass="47535">MTRKLFGTDGVRGTANTHPMTAEMALRLGAAAGRYFRPVGAGSPRVVIGKDTRLSGYMLENALTAGLTSTGMNVLLLGPVPTPAVGFLTRSMRAALGVMISASHNPHEDNGIKFFGPDGFKLSDEAEAEIEAILAGEIQPAQPGNIGRAKRIEDGRGRYQEYCKTTFPSGLRLDGLKVVIDCANGAAYRAAPEVLWELGAEVIPVGVEPNGKNINLRCGSTHPEAAAEAVRAHGADVGICLDGDADRVIILDETGKEADGDQIMALFAARWADEGRLRDGTLVATVMSNLGLERFLGARGLRLERTPVGDRYVVEAMRRGGWNLGGEQSGHIVMTDFATTGDGLLAGLQFLAAMAQTGRRASDLARSFETVPQLLQNVRYAAGQEPLKAPGVQAVIRDAEVRLNGAGRLLIRKSGTEPLIRVMAECEDEALLRDVVEEIVAAVRDAA</sequence>
<dbReference type="EC" id="5.4.2.10" evidence="1"/>
<dbReference type="EMBL" id="CP001150">
    <property type="protein sequence ID" value="ACM00033.1"/>
    <property type="molecule type" value="Genomic_DNA"/>
</dbReference>
<dbReference type="RefSeq" id="WP_011840403.1">
    <property type="nucleotide sequence ID" value="NC_011963.1"/>
</dbReference>
<dbReference type="SMR" id="B9KM35"/>
<dbReference type="GeneID" id="67445653"/>
<dbReference type="KEGG" id="rsk:RSKD131_0173"/>
<dbReference type="HOGENOM" id="CLU_016950_7_0_5"/>
<dbReference type="GO" id="GO:0005829">
    <property type="term" value="C:cytosol"/>
    <property type="evidence" value="ECO:0007669"/>
    <property type="project" value="TreeGrafter"/>
</dbReference>
<dbReference type="GO" id="GO:0000287">
    <property type="term" value="F:magnesium ion binding"/>
    <property type="evidence" value="ECO:0007669"/>
    <property type="project" value="UniProtKB-UniRule"/>
</dbReference>
<dbReference type="GO" id="GO:0008966">
    <property type="term" value="F:phosphoglucosamine mutase activity"/>
    <property type="evidence" value="ECO:0007669"/>
    <property type="project" value="UniProtKB-UniRule"/>
</dbReference>
<dbReference type="GO" id="GO:0004615">
    <property type="term" value="F:phosphomannomutase activity"/>
    <property type="evidence" value="ECO:0007669"/>
    <property type="project" value="TreeGrafter"/>
</dbReference>
<dbReference type="GO" id="GO:0005975">
    <property type="term" value="P:carbohydrate metabolic process"/>
    <property type="evidence" value="ECO:0007669"/>
    <property type="project" value="InterPro"/>
</dbReference>
<dbReference type="GO" id="GO:0009252">
    <property type="term" value="P:peptidoglycan biosynthetic process"/>
    <property type="evidence" value="ECO:0007669"/>
    <property type="project" value="TreeGrafter"/>
</dbReference>
<dbReference type="GO" id="GO:0006048">
    <property type="term" value="P:UDP-N-acetylglucosamine biosynthetic process"/>
    <property type="evidence" value="ECO:0007669"/>
    <property type="project" value="TreeGrafter"/>
</dbReference>
<dbReference type="CDD" id="cd05802">
    <property type="entry name" value="GlmM"/>
    <property type="match status" value="1"/>
</dbReference>
<dbReference type="FunFam" id="3.30.310.50:FF:000001">
    <property type="entry name" value="Phosphoglucosamine mutase"/>
    <property type="match status" value="1"/>
</dbReference>
<dbReference type="FunFam" id="3.40.120.10:FF:000001">
    <property type="entry name" value="Phosphoglucosamine mutase"/>
    <property type="match status" value="1"/>
</dbReference>
<dbReference type="FunFam" id="3.40.120.10:FF:000002">
    <property type="entry name" value="Phosphoglucosamine mutase"/>
    <property type="match status" value="1"/>
</dbReference>
<dbReference type="Gene3D" id="3.40.120.10">
    <property type="entry name" value="Alpha-D-Glucose-1,6-Bisphosphate, subunit A, domain 3"/>
    <property type="match status" value="3"/>
</dbReference>
<dbReference type="Gene3D" id="3.30.310.50">
    <property type="entry name" value="Alpha-D-phosphohexomutase, C-terminal domain"/>
    <property type="match status" value="1"/>
</dbReference>
<dbReference type="HAMAP" id="MF_01554_B">
    <property type="entry name" value="GlmM_B"/>
    <property type="match status" value="1"/>
</dbReference>
<dbReference type="InterPro" id="IPR005844">
    <property type="entry name" value="A-D-PHexomutase_a/b/a-I"/>
</dbReference>
<dbReference type="InterPro" id="IPR016055">
    <property type="entry name" value="A-D-PHexomutase_a/b/a-I/II/III"/>
</dbReference>
<dbReference type="InterPro" id="IPR005845">
    <property type="entry name" value="A-D-PHexomutase_a/b/a-II"/>
</dbReference>
<dbReference type="InterPro" id="IPR005846">
    <property type="entry name" value="A-D-PHexomutase_a/b/a-III"/>
</dbReference>
<dbReference type="InterPro" id="IPR005843">
    <property type="entry name" value="A-D-PHexomutase_C"/>
</dbReference>
<dbReference type="InterPro" id="IPR036900">
    <property type="entry name" value="A-D-PHexomutase_C_sf"/>
</dbReference>
<dbReference type="InterPro" id="IPR016066">
    <property type="entry name" value="A-D-PHexomutase_CS"/>
</dbReference>
<dbReference type="InterPro" id="IPR005841">
    <property type="entry name" value="Alpha-D-phosphohexomutase_SF"/>
</dbReference>
<dbReference type="InterPro" id="IPR006352">
    <property type="entry name" value="GlmM_bact"/>
</dbReference>
<dbReference type="InterPro" id="IPR050060">
    <property type="entry name" value="Phosphoglucosamine_mutase"/>
</dbReference>
<dbReference type="NCBIfam" id="TIGR01455">
    <property type="entry name" value="glmM"/>
    <property type="match status" value="1"/>
</dbReference>
<dbReference type="NCBIfam" id="NF008139">
    <property type="entry name" value="PRK10887.1"/>
    <property type="match status" value="1"/>
</dbReference>
<dbReference type="PANTHER" id="PTHR42946:SF1">
    <property type="entry name" value="PHOSPHOGLUCOMUTASE (ALPHA-D-GLUCOSE-1,6-BISPHOSPHATE-DEPENDENT)"/>
    <property type="match status" value="1"/>
</dbReference>
<dbReference type="PANTHER" id="PTHR42946">
    <property type="entry name" value="PHOSPHOHEXOSE MUTASE"/>
    <property type="match status" value="1"/>
</dbReference>
<dbReference type="Pfam" id="PF02878">
    <property type="entry name" value="PGM_PMM_I"/>
    <property type="match status" value="1"/>
</dbReference>
<dbReference type="Pfam" id="PF02879">
    <property type="entry name" value="PGM_PMM_II"/>
    <property type="match status" value="1"/>
</dbReference>
<dbReference type="Pfam" id="PF02880">
    <property type="entry name" value="PGM_PMM_III"/>
    <property type="match status" value="1"/>
</dbReference>
<dbReference type="Pfam" id="PF00408">
    <property type="entry name" value="PGM_PMM_IV"/>
    <property type="match status" value="1"/>
</dbReference>
<dbReference type="PRINTS" id="PR00509">
    <property type="entry name" value="PGMPMM"/>
</dbReference>
<dbReference type="SUPFAM" id="SSF55957">
    <property type="entry name" value="Phosphoglucomutase, C-terminal domain"/>
    <property type="match status" value="1"/>
</dbReference>
<dbReference type="SUPFAM" id="SSF53738">
    <property type="entry name" value="Phosphoglucomutase, first 3 domains"/>
    <property type="match status" value="3"/>
</dbReference>
<dbReference type="PROSITE" id="PS00710">
    <property type="entry name" value="PGM_PMM"/>
    <property type="match status" value="1"/>
</dbReference>
<gene>
    <name evidence="1" type="primary">glmM</name>
    <name type="ordered locus">RSKD131_0173</name>
</gene>
<keyword id="KW-0413">Isomerase</keyword>
<keyword id="KW-0460">Magnesium</keyword>
<keyword id="KW-0479">Metal-binding</keyword>
<keyword id="KW-0597">Phosphoprotein</keyword>
<evidence type="ECO:0000255" key="1">
    <source>
        <dbReference type="HAMAP-Rule" id="MF_01554"/>
    </source>
</evidence>
<comment type="function">
    <text evidence="1">Catalyzes the conversion of glucosamine-6-phosphate to glucosamine-1-phosphate.</text>
</comment>
<comment type="catalytic activity">
    <reaction evidence="1">
        <text>alpha-D-glucosamine 1-phosphate = D-glucosamine 6-phosphate</text>
        <dbReference type="Rhea" id="RHEA:23424"/>
        <dbReference type="ChEBI" id="CHEBI:58516"/>
        <dbReference type="ChEBI" id="CHEBI:58725"/>
        <dbReference type="EC" id="5.4.2.10"/>
    </reaction>
</comment>
<comment type="cofactor">
    <cofactor evidence="1">
        <name>Mg(2+)</name>
        <dbReference type="ChEBI" id="CHEBI:18420"/>
    </cofactor>
    <text evidence="1">Binds 1 Mg(2+) ion per subunit.</text>
</comment>
<comment type="PTM">
    <text evidence="1">Activated by phosphorylation.</text>
</comment>
<comment type="similarity">
    <text evidence="1">Belongs to the phosphohexose mutase family.</text>
</comment>
<feature type="chain" id="PRO_1000185380" description="Phosphoglucosamine mutase">
    <location>
        <begin position="1"/>
        <end position="447"/>
    </location>
</feature>
<feature type="active site" description="Phosphoserine intermediate" evidence="1">
    <location>
        <position position="103"/>
    </location>
</feature>
<feature type="binding site" description="via phosphate group" evidence="1">
    <location>
        <position position="103"/>
    </location>
    <ligand>
        <name>Mg(2+)</name>
        <dbReference type="ChEBI" id="CHEBI:18420"/>
    </ligand>
</feature>
<feature type="binding site" evidence="1">
    <location>
        <position position="242"/>
    </location>
    <ligand>
        <name>Mg(2+)</name>
        <dbReference type="ChEBI" id="CHEBI:18420"/>
    </ligand>
</feature>
<feature type="binding site" evidence="1">
    <location>
        <position position="244"/>
    </location>
    <ligand>
        <name>Mg(2+)</name>
        <dbReference type="ChEBI" id="CHEBI:18420"/>
    </ligand>
</feature>
<feature type="binding site" evidence="1">
    <location>
        <position position="246"/>
    </location>
    <ligand>
        <name>Mg(2+)</name>
        <dbReference type="ChEBI" id="CHEBI:18420"/>
    </ligand>
</feature>
<feature type="modified residue" description="Phosphoserine" evidence="1">
    <location>
        <position position="103"/>
    </location>
</feature>
<accession>B9KM35</accession>
<organism>
    <name type="scientific">Cereibacter sphaeroides (strain KD131 / KCTC 12085)</name>
    <name type="common">Rhodobacter sphaeroides</name>
    <dbReference type="NCBI Taxonomy" id="557760"/>
    <lineage>
        <taxon>Bacteria</taxon>
        <taxon>Pseudomonadati</taxon>
        <taxon>Pseudomonadota</taxon>
        <taxon>Alphaproteobacteria</taxon>
        <taxon>Rhodobacterales</taxon>
        <taxon>Paracoccaceae</taxon>
        <taxon>Cereibacter</taxon>
    </lineage>
</organism>
<proteinExistence type="inferred from homology"/>